<dbReference type="EMBL" id="AABR03102209">
    <property type="status" value="NOT_ANNOTATED_CDS"/>
    <property type="molecule type" value="Genomic_DNA"/>
</dbReference>
<dbReference type="EMBL" id="AABR03103182">
    <property type="status" value="NOT_ANNOTATED_CDS"/>
    <property type="molecule type" value="Genomic_DNA"/>
</dbReference>
<dbReference type="RefSeq" id="NP_001099540.1">
    <property type="nucleotide sequence ID" value="NM_001106070.1"/>
</dbReference>
<dbReference type="BioGRID" id="253262">
    <property type="interactions" value="2"/>
</dbReference>
<dbReference type="FunCoup" id="P0C5W1">
    <property type="interactions" value="837"/>
</dbReference>
<dbReference type="IntAct" id="P0C5W1">
    <property type="interactions" value="1"/>
</dbReference>
<dbReference type="STRING" id="10116.ENSRNOP00000025385"/>
<dbReference type="GlyGen" id="P0C5W1">
    <property type="glycosylation" value="2 sites"/>
</dbReference>
<dbReference type="iPTMnet" id="P0C5W1"/>
<dbReference type="PhosphoSitePlus" id="P0C5W1"/>
<dbReference type="SwissPalm" id="P0C5W1"/>
<dbReference type="jPOST" id="P0C5W1"/>
<dbReference type="PaxDb" id="10116-ENSRNOP00000025385"/>
<dbReference type="GeneID" id="290640"/>
<dbReference type="KEGG" id="rno:290640"/>
<dbReference type="UCSC" id="RGD:1308266">
    <property type="organism name" value="rat"/>
</dbReference>
<dbReference type="AGR" id="RGD:1308266"/>
<dbReference type="CTD" id="55201"/>
<dbReference type="RGD" id="1308266">
    <property type="gene designation" value="Map1s"/>
</dbReference>
<dbReference type="eggNOG" id="KOG3592">
    <property type="taxonomic scope" value="Eukaryota"/>
</dbReference>
<dbReference type="HOGENOM" id="CLU_000285_2_0_1"/>
<dbReference type="InParanoid" id="P0C5W1"/>
<dbReference type="PhylomeDB" id="P0C5W1"/>
<dbReference type="TreeFam" id="TF350229"/>
<dbReference type="PRO" id="PR:P0C5W1"/>
<dbReference type="Proteomes" id="UP000002494">
    <property type="component" value="Unplaced"/>
</dbReference>
<dbReference type="GO" id="GO:0042995">
    <property type="term" value="C:cell projection"/>
    <property type="evidence" value="ECO:0000266"/>
    <property type="project" value="RGD"/>
</dbReference>
<dbReference type="GO" id="GO:0005813">
    <property type="term" value="C:centrosome"/>
    <property type="evidence" value="ECO:0000266"/>
    <property type="project" value="RGD"/>
</dbReference>
<dbReference type="GO" id="GO:0005829">
    <property type="term" value="C:cytosol"/>
    <property type="evidence" value="ECO:0000266"/>
    <property type="project" value="RGD"/>
</dbReference>
<dbReference type="GO" id="GO:0030425">
    <property type="term" value="C:dendrite"/>
    <property type="evidence" value="ECO:0000266"/>
    <property type="project" value="RGD"/>
</dbReference>
<dbReference type="GO" id="GO:0005874">
    <property type="term" value="C:microtubule"/>
    <property type="evidence" value="ECO:0000266"/>
    <property type="project" value="RGD"/>
</dbReference>
<dbReference type="GO" id="GO:0005875">
    <property type="term" value="C:microtubule associated complex"/>
    <property type="evidence" value="ECO:0000318"/>
    <property type="project" value="GO_Central"/>
</dbReference>
<dbReference type="GO" id="GO:0015630">
    <property type="term" value="C:microtubule cytoskeleton"/>
    <property type="evidence" value="ECO:0000266"/>
    <property type="project" value="RGD"/>
</dbReference>
<dbReference type="GO" id="GO:0005815">
    <property type="term" value="C:microtubule organizing center"/>
    <property type="evidence" value="ECO:0000266"/>
    <property type="project" value="RGD"/>
</dbReference>
<dbReference type="GO" id="GO:1990498">
    <property type="term" value="C:mitotic spindle microtubule"/>
    <property type="evidence" value="ECO:0000266"/>
    <property type="project" value="RGD"/>
</dbReference>
<dbReference type="GO" id="GO:0043025">
    <property type="term" value="C:neuronal cell body"/>
    <property type="evidence" value="ECO:0000266"/>
    <property type="project" value="RGD"/>
</dbReference>
<dbReference type="GO" id="GO:0005634">
    <property type="term" value="C:nucleus"/>
    <property type="evidence" value="ECO:0000266"/>
    <property type="project" value="RGD"/>
</dbReference>
<dbReference type="GO" id="GO:0048471">
    <property type="term" value="C:perinuclear region of cytoplasm"/>
    <property type="evidence" value="ECO:0000266"/>
    <property type="project" value="RGD"/>
</dbReference>
<dbReference type="GO" id="GO:0005819">
    <property type="term" value="C:spindle"/>
    <property type="evidence" value="ECO:0000266"/>
    <property type="project" value="RGD"/>
</dbReference>
<dbReference type="GO" id="GO:0045202">
    <property type="term" value="C:synapse"/>
    <property type="evidence" value="ECO:0000266"/>
    <property type="project" value="RGD"/>
</dbReference>
<dbReference type="GO" id="GO:0003779">
    <property type="term" value="F:actin binding"/>
    <property type="evidence" value="ECO:0000318"/>
    <property type="project" value="GO_Central"/>
</dbReference>
<dbReference type="GO" id="GO:0051015">
    <property type="term" value="F:actin filament binding"/>
    <property type="evidence" value="ECO:0000266"/>
    <property type="project" value="RGD"/>
</dbReference>
<dbReference type="GO" id="GO:0048487">
    <property type="term" value="F:beta-tubulin binding"/>
    <property type="evidence" value="ECO:0000266"/>
    <property type="project" value="RGD"/>
</dbReference>
<dbReference type="GO" id="GO:0003677">
    <property type="term" value="F:DNA binding"/>
    <property type="evidence" value="ECO:0000266"/>
    <property type="project" value="RGD"/>
</dbReference>
<dbReference type="GO" id="GO:0042802">
    <property type="term" value="F:identical protein binding"/>
    <property type="evidence" value="ECO:0000266"/>
    <property type="project" value="RGD"/>
</dbReference>
<dbReference type="GO" id="GO:0008017">
    <property type="term" value="F:microtubule binding"/>
    <property type="evidence" value="ECO:0000266"/>
    <property type="project" value="RGD"/>
</dbReference>
<dbReference type="GO" id="GO:0015631">
    <property type="term" value="F:tubulin binding"/>
    <property type="evidence" value="ECO:0000266"/>
    <property type="project" value="RGD"/>
</dbReference>
<dbReference type="GO" id="GO:0006915">
    <property type="term" value="P:apoptotic process"/>
    <property type="evidence" value="ECO:0007669"/>
    <property type="project" value="UniProtKB-KW"/>
</dbReference>
<dbReference type="GO" id="GO:0007409">
    <property type="term" value="P:axonogenesis"/>
    <property type="evidence" value="ECO:0000318"/>
    <property type="project" value="GO_Central"/>
</dbReference>
<dbReference type="GO" id="GO:0007420">
    <property type="term" value="P:brain development"/>
    <property type="evidence" value="ECO:0000266"/>
    <property type="project" value="RGD"/>
</dbReference>
<dbReference type="GO" id="GO:0016358">
    <property type="term" value="P:dendrite development"/>
    <property type="evidence" value="ECO:0000318"/>
    <property type="project" value="GO_Central"/>
</dbReference>
<dbReference type="GO" id="GO:0051310">
    <property type="term" value="P:metaphase chromosome alignment"/>
    <property type="evidence" value="ECO:0000266"/>
    <property type="project" value="RGD"/>
</dbReference>
<dbReference type="GO" id="GO:0034454">
    <property type="term" value="P:microtubule anchoring at centrosome"/>
    <property type="evidence" value="ECO:0000266"/>
    <property type="project" value="RGD"/>
</dbReference>
<dbReference type="GO" id="GO:0001578">
    <property type="term" value="P:microtubule bundle formation"/>
    <property type="evidence" value="ECO:0000266"/>
    <property type="project" value="RGD"/>
</dbReference>
<dbReference type="GO" id="GO:0000226">
    <property type="term" value="P:microtubule cytoskeleton organization"/>
    <property type="evidence" value="ECO:0000266"/>
    <property type="project" value="RGD"/>
</dbReference>
<dbReference type="GO" id="GO:0007052">
    <property type="term" value="P:mitotic spindle organization"/>
    <property type="evidence" value="ECO:0000266"/>
    <property type="project" value="RGD"/>
</dbReference>
<dbReference type="GO" id="GO:0007399">
    <property type="term" value="P:nervous system development"/>
    <property type="evidence" value="ECO:0000266"/>
    <property type="project" value="RGD"/>
</dbReference>
<dbReference type="GO" id="GO:0048812">
    <property type="term" value="P:neuron projection morphogenesis"/>
    <property type="evidence" value="ECO:0000266"/>
    <property type="project" value="RGD"/>
</dbReference>
<dbReference type="GO" id="GO:0031114">
    <property type="term" value="P:regulation of microtubule depolymerization"/>
    <property type="evidence" value="ECO:0000318"/>
    <property type="project" value="GO_Central"/>
</dbReference>
<dbReference type="InterPro" id="IPR026074">
    <property type="entry name" value="MAP1"/>
</dbReference>
<dbReference type="InterPro" id="IPR056617">
    <property type="entry name" value="MAP1B/S_N"/>
</dbReference>
<dbReference type="InterPro" id="IPR036866">
    <property type="entry name" value="RibonucZ/Hydroxyglut_hydro"/>
</dbReference>
<dbReference type="PANTHER" id="PTHR13843">
    <property type="entry name" value="MICROTUBULE-ASSOCIATED PROTEIN"/>
    <property type="match status" value="1"/>
</dbReference>
<dbReference type="PANTHER" id="PTHR13843:SF11">
    <property type="entry name" value="MICROTUBULE-ASSOCIATED PROTEIN 1S"/>
    <property type="match status" value="1"/>
</dbReference>
<dbReference type="Pfam" id="PF23415">
    <property type="entry name" value="MAPB1_N"/>
    <property type="match status" value="1"/>
</dbReference>
<dbReference type="Pfam" id="PF25281">
    <property type="entry name" value="MBL_MAP1B"/>
    <property type="match status" value="2"/>
</dbReference>
<dbReference type="SUPFAM" id="SSF56281">
    <property type="entry name" value="Metallo-hydrolase/oxidoreductase"/>
    <property type="match status" value="1"/>
</dbReference>
<evidence type="ECO:0000250" key="1"/>
<evidence type="ECO:0000250" key="2">
    <source>
        <dbReference type="UniProtKB" id="Q66K74"/>
    </source>
</evidence>
<evidence type="ECO:0000250" key="3">
    <source>
        <dbReference type="UniProtKB" id="Q8C052"/>
    </source>
</evidence>
<evidence type="ECO:0000256" key="4">
    <source>
        <dbReference type="SAM" id="MobiDB-lite"/>
    </source>
</evidence>
<evidence type="ECO:0000269" key="5">
    <source>
    </source>
</evidence>
<evidence type="ECO:0000305" key="6"/>
<evidence type="ECO:0007744" key="7">
    <source>
    </source>
</evidence>
<comment type="function">
    <text evidence="1">Microtubule-associated protein that mediates aggregation of mitochondria resulting in cell death and genomic destruction (MAGD). Plays a role in anchoring the microtubule organizing center to the centrosomes. Binds to DNA. Plays a role in apoptosis. Involved in the formation of microtubule bundles (By similarity).</text>
</comment>
<comment type="subunit">
    <text evidence="1 5">Heterodimer of a heavy and a light chain. Interacts with microtubules and actin. Both MAP1S heavy and light chains interact with microtubules. MAP1S light chain interacts with actin. Interacts with LRPPRC, RASSF1, microtubules and VCY2. Interacts (via C-terminus) with GAN (via Kelch domains). Interacts with WDR47 (via N-terminus of light chain) (By similarity). Interacts with ESR1.</text>
</comment>
<comment type="subcellular location">
    <subcellularLocation>
        <location evidence="1">Nucleus</location>
    </subcellularLocation>
    <subcellularLocation>
        <location evidence="1">Cytoplasm</location>
        <location evidence="1">Cytosol</location>
    </subcellularLocation>
    <subcellularLocation>
        <location evidence="5">Cytoplasm</location>
        <location evidence="5">Cytoskeleton</location>
    </subcellularLocation>
    <subcellularLocation>
        <location evidence="5">Cytoplasm</location>
        <location evidence="5">Cytoskeleton</location>
        <location evidence="5">Spindle</location>
    </subcellularLocation>
    <text evidence="1">Detected in perinuclear punctate network corresponding to mitochondrial aggregates and in the nucleus in cells exhibiting apoptosis. Associated specifically with microtubules stabilized by paclitaxel and colocalizes with RASSF1. In interphase cells, shows a diffuse cytoplasmic staining with partial localization to the microtubules. During the different stages of mitosis detected at the spindle microtubules (By similarity). Detected in filopodia-like protrusions and synapses.</text>
</comment>
<comment type="tissue specificity">
    <text evidence="5">Expressed in cortex cerebellum, dorsal root ganglia, frontal cortex, hippocampus, hypothalamus, mesencephalon, medulla oblongata, occipital cortex, pons, spinal cord, striatum of the brain, neurons, heart, testis and skeletal muscle (at protein level).</text>
</comment>
<comment type="domain">
    <text evidence="1">The N-terminus of the heavy chain associates with the C-terminus of the light chain to form the heterodimer complex. Its C-terminal part of the heavy chain interacts with ESR1 (By similarity).</text>
</comment>
<comment type="similarity">
    <text evidence="6">Belongs to the MAP1A/MAP1B/MAP1S family.</text>
</comment>
<sequence>MAAVMAAPEPAEAPSSLLLLVVGGECGCPGLLAYVLEELERGVRSWEDVDPDVCSLDEQLKAFVSRHSATFSSIVKGQRSLHHRGETLETLVLLNPSDKSLCDELRNLLMDPAPHKLLVLAGPCLEETGELLLQTGGFSAHHFLQVLGDKEVQDALASAPAAPALTVSCPTFGDWALLGPAPGLRLRLNPPARLPSSEGLRAFLEYVAESLEPPSPFELLEPPATGGFLRLARPCCYVFPGGLGDAAFFAVNGFTVLVNGGSNPKSSFWKLVRHLDRVDAVLVTHAGADSLPGLNSLLRRKLAEREAAAGPQGQHEERLRRLLSPALGVVFLNAREAGSRLRGGEDEAVCARSLLRSLGIVPLPLQRGPQPSCPTVLFEKLGVGRLELFVLHPPPGDPAAPACALLVWQPAAPGDKVVRVLFPGRTPPARLLDGLQRLQHLPCLRRPVVTTQDLEVPSRANSQDSLASRDSTRKEPVRGTVGATSRSAVRREPALATRDQKKDTKPGPTRSTVRDVRRSGPGVVTTKPRVSQNGPRAPVPAAPPAAPAPEFPGEAENIVESERPPAPSPTLSPAQSPPPTAPGNSPERLSLSPLRPEPAPDASPSATTPTLTTPSLPAELGSPHSTEVDESLSVSFEQVLPAGDAGLSLPLRLARRSTSPHDVDLCLVSPCEFSHRKPPPPASPGSSDSSARSQERPPETPPTSVSESLPTLSDSDPVPVADSDDDAGSESAARDPLPTPRVPPPLPDAPGICMVDPEALPPRARQPLSTANSSRGRKAPARPSSASAAPRAATVAAKTKGPVGDRSRPLSARSEPADKPGRVPLTRKPSVPKTVPKMASATRNSSGPSSRPAPLAAGSPVYLDLAYLPGGGAGHLDQNFFLRVRALCYVISGQGQRQEEGLRGVLDALLAGKRQWDLDLQVTLIPTFDSAVMHRWYEETHEQHQALGIRVLGSGSLVSMQDEAFPACKVEF</sequence>
<protein>
    <recommendedName>
        <fullName>Microtubule-associated protein 1S</fullName>
        <shortName>MAP-1S</shortName>
    </recommendedName>
    <component>
        <recommendedName>
            <fullName>MAP1S heavy chain</fullName>
        </recommendedName>
    </component>
    <component>
        <recommendedName>
            <fullName>MAP1S light chain</fullName>
        </recommendedName>
    </component>
</protein>
<keyword id="KW-0053">Apoptosis</keyword>
<keyword id="KW-0963">Cytoplasm</keyword>
<keyword id="KW-0206">Cytoskeleton</keyword>
<keyword id="KW-0238">DNA-binding</keyword>
<keyword id="KW-0493">Microtubule</keyword>
<keyword id="KW-0539">Nucleus</keyword>
<keyword id="KW-0597">Phosphoprotein</keyword>
<keyword id="KW-1185">Reference proteome</keyword>
<organism>
    <name type="scientific">Rattus norvegicus</name>
    <name type="common">Rat</name>
    <dbReference type="NCBI Taxonomy" id="10116"/>
    <lineage>
        <taxon>Eukaryota</taxon>
        <taxon>Metazoa</taxon>
        <taxon>Chordata</taxon>
        <taxon>Craniata</taxon>
        <taxon>Vertebrata</taxon>
        <taxon>Euteleostomi</taxon>
        <taxon>Mammalia</taxon>
        <taxon>Eutheria</taxon>
        <taxon>Euarchontoglires</taxon>
        <taxon>Glires</taxon>
        <taxon>Rodentia</taxon>
        <taxon>Myomorpha</taxon>
        <taxon>Muroidea</taxon>
        <taxon>Muridae</taxon>
        <taxon>Murinae</taxon>
        <taxon>Rattus</taxon>
    </lineage>
</organism>
<gene>
    <name type="primary">Map1s</name>
</gene>
<feature type="chain" id="PRO_0000311385" description="Microtubule-associated protein 1S">
    <location>
        <begin position="1"/>
        <end position="972"/>
    </location>
</feature>
<feature type="chain" id="PRO_0000311386" description="MAP1S heavy chain">
    <location>
        <begin position="1"/>
        <end position="741"/>
    </location>
</feature>
<feature type="chain" id="PRO_0000311387" description="MAP1S light chain">
    <location>
        <begin position="742"/>
        <end position="972"/>
    </location>
</feature>
<feature type="region of interest" description="Necessary for the microtubule-organizing center localization" evidence="1">
    <location>
        <begin position="1"/>
        <end position="715"/>
    </location>
</feature>
<feature type="region of interest" description="Disordered" evidence="4">
    <location>
        <begin position="454"/>
        <end position="632"/>
    </location>
</feature>
<feature type="region of interest" description="Necessary for interaction with RASSF1" evidence="1">
    <location>
        <begin position="600"/>
        <end position="972"/>
    </location>
</feature>
<feature type="region of interest" description="Necessary for association with microtubules" evidence="1">
    <location>
        <begin position="644"/>
        <end position="879"/>
    </location>
</feature>
<feature type="region of interest" description="Disordered" evidence="4">
    <location>
        <begin position="671"/>
        <end position="854"/>
    </location>
</feature>
<feature type="region of interest" description="Necessary for association with actin" evidence="1">
    <location>
        <begin position="874"/>
        <end position="972"/>
    </location>
</feature>
<feature type="region of interest" description="Necessary for the mitochondrial aggregation and genome destruction" evidence="1">
    <location>
        <begin position="880"/>
        <end position="904"/>
    </location>
</feature>
<feature type="compositionally biased region" description="Polar residues" evidence="4">
    <location>
        <begin position="454"/>
        <end position="469"/>
    </location>
</feature>
<feature type="compositionally biased region" description="Basic and acidic residues" evidence="4">
    <location>
        <begin position="489"/>
        <end position="505"/>
    </location>
</feature>
<feature type="compositionally biased region" description="Pro residues" evidence="4">
    <location>
        <begin position="537"/>
        <end position="550"/>
    </location>
</feature>
<feature type="compositionally biased region" description="Pro residues" evidence="4">
    <location>
        <begin position="564"/>
        <end position="581"/>
    </location>
</feature>
<feature type="compositionally biased region" description="Low complexity" evidence="4">
    <location>
        <begin position="602"/>
        <end position="620"/>
    </location>
</feature>
<feature type="compositionally biased region" description="Low complexity" evidence="4">
    <location>
        <begin position="702"/>
        <end position="721"/>
    </location>
</feature>
<feature type="compositionally biased region" description="Pro residues" evidence="4">
    <location>
        <begin position="737"/>
        <end position="748"/>
    </location>
</feature>
<feature type="compositionally biased region" description="Low complexity" evidence="4">
    <location>
        <begin position="781"/>
        <end position="800"/>
    </location>
</feature>
<feature type="modified residue" description="Phosphoserine" evidence="7">
    <location>
        <position position="462"/>
    </location>
</feature>
<feature type="modified residue" description="Phosphoserine" evidence="7">
    <location>
        <position position="585"/>
    </location>
</feature>
<feature type="modified residue" description="Phosphoserine" evidence="2">
    <location>
        <position position="590"/>
    </location>
</feature>
<feature type="modified residue" description="Phosphoserine" evidence="2">
    <location>
        <position position="592"/>
    </location>
</feature>
<feature type="modified residue" description="Phosphoserine" evidence="3">
    <location>
        <position position="659"/>
    </location>
</feature>
<feature type="modified residue" description="Phosphoserine" evidence="2">
    <location>
        <position position="683"/>
    </location>
</feature>
<feature type="modified residue" description="Phosphoserine" evidence="7">
    <location>
        <position position="723"/>
    </location>
</feature>
<reference key="1">
    <citation type="journal article" date="2004" name="Nature">
        <title>Genome sequence of the Brown Norway rat yields insights into mammalian evolution.</title>
        <authorList>
            <person name="Gibbs R.A."/>
            <person name="Weinstock G.M."/>
            <person name="Metzker M.L."/>
            <person name="Muzny D.M."/>
            <person name="Sodergren E.J."/>
            <person name="Scherer S."/>
            <person name="Scott G."/>
            <person name="Steffen D."/>
            <person name="Worley K.C."/>
            <person name="Burch P.E."/>
            <person name="Okwuonu G."/>
            <person name="Hines S."/>
            <person name="Lewis L."/>
            <person name="Deramo C."/>
            <person name="Delgado O."/>
            <person name="Dugan-Rocha S."/>
            <person name="Miner G."/>
            <person name="Morgan M."/>
            <person name="Hawes A."/>
            <person name="Gill R."/>
            <person name="Holt R.A."/>
            <person name="Adams M.D."/>
            <person name="Amanatides P.G."/>
            <person name="Baden-Tillson H."/>
            <person name="Barnstead M."/>
            <person name="Chin S."/>
            <person name="Evans C.A."/>
            <person name="Ferriera S."/>
            <person name="Fosler C."/>
            <person name="Glodek A."/>
            <person name="Gu Z."/>
            <person name="Jennings D."/>
            <person name="Kraft C.L."/>
            <person name="Nguyen T."/>
            <person name="Pfannkoch C.M."/>
            <person name="Sitter C."/>
            <person name="Sutton G.G."/>
            <person name="Venter J.C."/>
            <person name="Woodage T."/>
            <person name="Smith D."/>
            <person name="Lee H.-M."/>
            <person name="Gustafson E."/>
            <person name="Cahill P."/>
            <person name="Kana A."/>
            <person name="Doucette-Stamm L."/>
            <person name="Weinstock K."/>
            <person name="Fechtel K."/>
            <person name="Weiss R.B."/>
            <person name="Dunn D.M."/>
            <person name="Green E.D."/>
            <person name="Blakesley R.W."/>
            <person name="Bouffard G.G."/>
            <person name="De Jong P.J."/>
            <person name="Osoegawa K."/>
            <person name="Zhu B."/>
            <person name="Marra M."/>
            <person name="Schein J."/>
            <person name="Bosdet I."/>
            <person name="Fjell C."/>
            <person name="Jones S."/>
            <person name="Krzywinski M."/>
            <person name="Mathewson C."/>
            <person name="Siddiqui A."/>
            <person name="Wye N."/>
            <person name="McPherson J."/>
            <person name="Zhao S."/>
            <person name="Fraser C.M."/>
            <person name="Shetty J."/>
            <person name="Shatsman S."/>
            <person name="Geer K."/>
            <person name="Chen Y."/>
            <person name="Abramzon S."/>
            <person name="Nierman W.C."/>
            <person name="Havlak P.H."/>
            <person name="Chen R."/>
            <person name="Durbin K.J."/>
            <person name="Egan A."/>
            <person name="Ren Y."/>
            <person name="Song X.-Z."/>
            <person name="Li B."/>
            <person name="Liu Y."/>
            <person name="Qin X."/>
            <person name="Cawley S."/>
            <person name="Cooney A.J."/>
            <person name="D'Souza L.M."/>
            <person name="Martin K."/>
            <person name="Wu J.Q."/>
            <person name="Gonzalez-Garay M.L."/>
            <person name="Jackson A.R."/>
            <person name="Kalafus K.J."/>
            <person name="McLeod M.P."/>
            <person name="Milosavljevic A."/>
            <person name="Virk D."/>
            <person name="Volkov A."/>
            <person name="Wheeler D.A."/>
            <person name="Zhang Z."/>
            <person name="Bailey J.A."/>
            <person name="Eichler E.E."/>
            <person name="Tuzun E."/>
            <person name="Birney E."/>
            <person name="Mongin E."/>
            <person name="Ureta-Vidal A."/>
            <person name="Woodwark C."/>
            <person name="Zdobnov E."/>
            <person name="Bork P."/>
            <person name="Suyama M."/>
            <person name="Torrents D."/>
            <person name="Alexandersson M."/>
            <person name="Trask B.J."/>
            <person name="Young J.M."/>
            <person name="Huang H."/>
            <person name="Wang H."/>
            <person name="Xing H."/>
            <person name="Daniels S."/>
            <person name="Gietzen D."/>
            <person name="Schmidt J."/>
            <person name="Stevens K."/>
            <person name="Vitt U."/>
            <person name="Wingrove J."/>
            <person name="Camara F."/>
            <person name="Mar Alba M."/>
            <person name="Abril J.F."/>
            <person name="Guigo R."/>
            <person name="Smit A."/>
            <person name="Dubchak I."/>
            <person name="Rubin E.M."/>
            <person name="Couronne O."/>
            <person name="Poliakov A."/>
            <person name="Huebner N."/>
            <person name="Ganten D."/>
            <person name="Goesele C."/>
            <person name="Hummel O."/>
            <person name="Kreitler T."/>
            <person name="Lee Y.-A."/>
            <person name="Monti J."/>
            <person name="Schulz H."/>
            <person name="Zimdahl H."/>
            <person name="Himmelbauer H."/>
            <person name="Lehrach H."/>
            <person name="Jacob H.J."/>
            <person name="Bromberg S."/>
            <person name="Gullings-Handley J."/>
            <person name="Jensen-Seaman M.I."/>
            <person name="Kwitek A.E."/>
            <person name="Lazar J."/>
            <person name="Pasko D."/>
            <person name="Tonellato P.J."/>
            <person name="Twigger S."/>
            <person name="Ponting C.P."/>
            <person name="Duarte J.M."/>
            <person name="Rice S."/>
            <person name="Goodstadt L."/>
            <person name="Beatson S.A."/>
            <person name="Emes R.D."/>
            <person name="Winter E.E."/>
            <person name="Webber C."/>
            <person name="Brandt P."/>
            <person name="Nyakatura G."/>
            <person name="Adetobi M."/>
            <person name="Chiaromonte F."/>
            <person name="Elnitski L."/>
            <person name="Eswara P."/>
            <person name="Hardison R.C."/>
            <person name="Hou M."/>
            <person name="Kolbe D."/>
            <person name="Makova K."/>
            <person name="Miller W."/>
            <person name="Nekrutenko A."/>
            <person name="Riemer C."/>
            <person name="Schwartz S."/>
            <person name="Taylor J."/>
            <person name="Yang S."/>
            <person name="Zhang Y."/>
            <person name="Lindpaintner K."/>
            <person name="Andrews T.D."/>
            <person name="Caccamo M."/>
            <person name="Clamp M."/>
            <person name="Clarke L."/>
            <person name="Curwen V."/>
            <person name="Durbin R.M."/>
            <person name="Eyras E."/>
            <person name="Searle S.M."/>
            <person name="Cooper G.M."/>
            <person name="Batzoglou S."/>
            <person name="Brudno M."/>
            <person name="Sidow A."/>
            <person name="Stone E.A."/>
            <person name="Payseur B.A."/>
            <person name="Bourque G."/>
            <person name="Lopez-Otin C."/>
            <person name="Puente X.S."/>
            <person name="Chakrabarti K."/>
            <person name="Chatterji S."/>
            <person name="Dewey C."/>
            <person name="Pachter L."/>
            <person name="Bray N."/>
            <person name="Yap V.B."/>
            <person name="Caspi A."/>
            <person name="Tesler G."/>
            <person name="Pevzner P.A."/>
            <person name="Haussler D."/>
            <person name="Roskin K.M."/>
            <person name="Baertsch R."/>
            <person name="Clawson H."/>
            <person name="Furey T.S."/>
            <person name="Hinrichs A.S."/>
            <person name="Karolchik D."/>
            <person name="Kent W.J."/>
            <person name="Rosenbloom K.R."/>
            <person name="Trumbower H."/>
            <person name="Weirauch M."/>
            <person name="Cooper D.N."/>
            <person name="Stenson P.D."/>
            <person name="Ma B."/>
            <person name="Brent M."/>
            <person name="Arumugam M."/>
            <person name="Shteynberg D."/>
            <person name="Copley R.R."/>
            <person name="Taylor M.S."/>
            <person name="Riethman H."/>
            <person name="Mudunuri U."/>
            <person name="Peterson J."/>
            <person name="Guyer M."/>
            <person name="Felsenfeld A."/>
            <person name="Old S."/>
            <person name="Mockrin S."/>
            <person name="Collins F.S."/>
        </authorList>
    </citation>
    <scope>NUCLEOTIDE SEQUENCE [LARGE SCALE GENOMIC DNA]</scope>
    <source>
        <strain>Brown Norway</strain>
    </source>
</reference>
<reference key="2">
    <citation type="journal article" date="2007" name="Biochem. Biophys. Res. Commun.">
        <title>The NMDAR subunit NR3A interacts with microtubule-associated protein 1S in the brain.</title>
        <authorList>
            <person name="Eriksson M."/>
            <person name="Samuelsson H."/>
            <person name="Samuelsson E.-B."/>
            <person name="Liu L."/>
            <person name="McKeehan W.L."/>
            <person name="Benedikz E."/>
            <person name="Sundstroem E."/>
        </authorList>
    </citation>
    <scope>INTERACTION WITH ESR1</scope>
    <scope>SUBCELLULAR LOCATION</scope>
    <scope>TISSUE SPECIFICITY</scope>
</reference>
<reference key="3">
    <citation type="journal article" date="2012" name="Nat. Commun.">
        <title>Quantitative maps of protein phosphorylation sites across 14 different rat organs and tissues.</title>
        <authorList>
            <person name="Lundby A."/>
            <person name="Secher A."/>
            <person name="Lage K."/>
            <person name="Nordsborg N.B."/>
            <person name="Dmytriyev A."/>
            <person name="Lundby C."/>
            <person name="Olsen J.V."/>
        </authorList>
    </citation>
    <scope>PHOSPHORYLATION [LARGE SCALE ANALYSIS] AT SER-462; SER-585 AND SER-723</scope>
    <scope>IDENTIFICATION BY MASS SPECTROMETRY [LARGE SCALE ANALYSIS]</scope>
</reference>
<proteinExistence type="evidence at protein level"/>
<accession>P0C5W1</accession>
<name>MAP1S_RAT</name>